<keyword id="KW-0064">Aspartyl protease</keyword>
<keyword id="KW-0903">Direct protein sequencing</keyword>
<keyword id="KW-0325">Glycoprotein</keyword>
<keyword id="KW-0378">Hydrolase</keyword>
<keyword id="KW-0645">Protease</keyword>
<keyword id="KW-0964">Secreted</keyword>
<organism>
    <name type="scientific">Bubalus bubalis</name>
    <name type="common">Domestic water buffalo</name>
    <dbReference type="NCBI Taxonomy" id="89462"/>
    <lineage>
        <taxon>Eukaryota</taxon>
        <taxon>Metazoa</taxon>
        <taxon>Chordata</taxon>
        <taxon>Craniata</taxon>
        <taxon>Vertebrata</taxon>
        <taxon>Euteleostomi</taxon>
        <taxon>Mammalia</taxon>
        <taxon>Eutheria</taxon>
        <taxon>Laurasiatheria</taxon>
        <taxon>Artiodactyla</taxon>
        <taxon>Ruminantia</taxon>
        <taxon>Pecora</taxon>
        <taxon>Bovidae</taxon>
        <taxon>Bovinae</taxon>
        <taxon>Bubalus</taxon>
    </lineage>
</organism>
<accession>P86371</accession>
<accession>P85050</accession>
<accession>P86376</accession>
<accession>P86377</accession>
<protein>
    <recommendedName>
        <fullName>Pregnancy-associated glycoprotein 62</fullName>
        <shortName>PAG 62</shortName>
        <ecNumber evidence="2">3.4.23.-</ecNumber>
    </recommendedName>
    <alternativeName>
        <fullName>Pregnancy-associated glycoprotein 58F</fullName>
    </alternativeName>
    <alternativeName>
        <fullName>Pregnancy-associated glycoprotein 65E</fullName>
    </alternativeName>
    <alternativeName>
        <fullName evidence="6">Pregnancy-associated glycoprotein 73I</fullName>
    </alternativeName>
</protein>
<evidence type="ECO:0000250" key="1">
    <source>
        <dbReference type="UniProtKB" id="P85048"/>
    </source>
</evidence>
<evidence type="ECO:0000250" key="2">
    <source>
        <dbReference type="UniProtKB" id="P85050"/>
    </source>
</evidence>
<evidence type="ECO:0000255" key="3"/>
<evidence type="ECO:0000269" key="4">
    <source>
    </source>
</evidence>
<evidence type="ECO:0000269" key="5">
    <source>
    </source>
</evidence>
<evidence type="ECO:0000303" key="6">
    <source>
    </source>
</evidence>
<evidence type="ECO:0000305" key="7"/>
<feature type="chain" id="PRO_0000389543" description="Pregnancy-associated glycoprotein 62">
    <location>
        <begin position="1"/>
        <end position="15" status="greater than"/>
    </location>
</feature>
<feature type="non-terminal residue" evidence="6">
    <location>
        <position position="15"/>
    </location>
</feature>
<proteinExistence type="evidence at protein level"/>
<comment type="subcellular location">
    <subcellularLocation>
        <location evidence="4">Secreted</location>
        <location evidence="4">Extracellular space</location>
    </subcellularLocation>
</comment>
<comment type="tissue specificity">
    <text evidence="4 5">Expressed in chorionic epithelium (trophectoderm).</text>
</comment>
<comment type="developmental stage">
    <text evidence="4 5">Expressed during 5th month of pregnancy and continues through the gestation period.</text>
</comment>
<comment type="PTM">
    <text evidence="1">N-glycosylated.</text>
</comment>
<comment type="similarity">
    <text evidence="3">Belongs to the peptidase A1 family.</text>
</comment>
<reference evidence="7" key="1">
    <citation type="journal article" date="2013" name="BMC Vet. Res.">
        <title>Purification of pregnancy-associated glycoproteins from late-pregnancy Bubalus bubalis placentas and development of a radioimmunoassay for pregnancy diagnosis in water buffalo females.</title>
        <authorList>
            <person name="Barbato O."/>
            <person name="Melo de Sousa N."/>
            <person name="Barile V.L."/>
            <person name="Canali C."/>
            <person name="Beckers J.F."/>
        </authorList>
    </citation>
    <scope>PROTEIN SEQUENCE</scope>
    <scope>TISSUE SPECIFICITY</scope>
    <scope>DEVELOPMENTAL STAGE</scope>
    <source>
        <tissue evidence="5">Fetal cotyledon</tissue>
    </source>
</reference>
<reference key="2">
    <citation type="journal article" date="2008" name="Res. Vet. Sci.">
        <title>Isolation of new pregnancy-associated glycoproteins from water buffalo (Bubalus bubalis) placenta by Vicia villosa affinity chromatography.</title>
        <authorList>
            <person name="Barbato O."/>
            <person name="Sousa N.M."/>
            <person name="Klisch K."/>
            <person name="Clerget E."/>
            <person name="Debenedetti A."/>
            <person name="Barile V.L."/>
            <person name="Malfatti A."/>
            <person name="Beckers J.F."/>
        </authorList>
    </citation>
    <scope>PROTEIN SEQUENCE OF 1-13</scope>
    <scope>SUBCELLULAR LOCATION</scope>
    <scope>TISSUE SPECIFICITY</scope>
    <scope>DEVELOPMENTAL STAGE</scope>
    <source>
        <tissue>Trophectoderm</tissue>
    </source>
</reference>
<dbReference type="EC" id="3.4.23.-" evidence="2"/>
<dbReference type="GO" id="GO:0005576">
    <property type="term" value="C:extracellular region"/>
    <property type="evidence" value="ECO:0007669"/>
    <property type="project" value="UniProtKB-SubCell"/>
</dbReference>
<dbReference type="GO" id="GO:0004190">
    <property type="term" value="F:aspartic-type endopeptidase activity"/>
    <property type="evidence" value="ECO:0007669"/>
    <property type="project" value="UniProtKB-KW"/>
</dbReference>
<dbReference type="GO" id="GO:0006508">
    <property type="term" value="P:proteolysis"/>
    <property type="evidence" value="ECO:0007669"/>
    <property type="project" value="UniProtKB-KW"/>
</dbReference>
<sequence>RGSXLTHLPLRNISD</sequence>
<name>PAG62_BUBBU</name>